<sequence length="536" mass="58203">MAFMGTSSAVHPAILVILDGWGYREQTDGNAVAAAKTPIFDALKASYPFTLIHTSGKAVGLPRGQMGNSEVGHLNLGAGRMVPQELVRISDAVEEGTLLSNPELLRLCRTVRERGGKLHGVGLVSDGGVHSHIEHLFGLLDLAKREGFETLFIHGMSDGRDTPPTSGVAYFEKLEARIAETGFGTIATLGGRYFGMDRDRRWDRTEAMYRVMTETGPGTGKRASETLRESHAAGKTDEFVLPVRLAAGAVEPGDGVIYFNFRPDRARQLTRAFVQADFDGFVRPYLDPLAFLTFTQYDATLPVAVAFAPQSLDNLLGQVIAHHGLRQFRIAETEKYAHVTYFFNGGIETPLPGEERSMIQSPLVPTYDLKPEMAAREVTDHAVAAIETRQYSLIVINYANPDMVGHTGNFDATVKAVETVDACIGRLVEACVRAGGTMLLTADHGNAELMWDEQGNPWTAHTTNPVPFILIESEGLKIPGWGTDVQLRAGGSLGDIAPTILEILGLPQPAEMTGRSLLGESEIEIRTPRSPLRVGL</sequence>
<feature type="chain" id="PRO_0000212151" description="2,3-bisphosphoglycerate-independent phosphoglycerate mutase">
    <location>
        <begin position="1"/>
        <end position="536"/>
    </location>
</feature>
<feature type="active site" description="Phosphoserine intermediate" evidence="1">
    <location>
        <position position="69"/>
    </location>
</feature>
<feature type="binding site" evidence="1">
    <location>
        <position position="19"/>
    </location>
    <ligand>
        <name>Mn(2+)</name>
        <dbReference type="ChEBI" id="CHEBI:29035"/>
        <label>2</label>
    </ligand>
</feature>
<feature type="binding site" evidence="1">
    <location>
        <position position="69"/>
    </location>
    <ligand>
        <name>Mn(2+)</name>
        <dbReference type="ChEBI" id="CHEBI:29035"/>
        <label>2</label>
    </ligand>
</feature>
<feature type="binding site" evidence="1">
    <location>
        <position position="130"/>
    </location>
    <ligand>
        <name>substrate</name>
    </ligand>
</feature>
<feature type="binding site" evidence="1">
    <location>
        <begin position="160"/>
        <end position="161"/>
    </location>
    <ligand>
        <name>substrate</name>
    </ligand>
</feature>
<feature type="binding site" evidence="1">
    <location>
        <position position="192"/>
    </location>
    <ligand>
        <name>substrate</name>
    </ligand>
</feature>
<feature type="binding site" evidence="1">
    <location>
        <position position="198"/>
    </location>
    <ligand>
        <name>substrate</name>
    </ligand>
</feature>
<feature type="binding site" evidence="1">
    <location>
        <begin position="262"/>
        <end position="265"/>
    </location>
    <ligand>
        <name>substrate</name>
    </ligand>
</feature>
<feature type="binding site" evidence="1">
    <location>
        <position position="335"/>
    </location>
    <ligand>
        <name>substrate</name>
    </ligand>
</feature>
<feature type="binding site" evidence="1">
    <location>
        <position position="402"/>
    </location>
    <ligand>
        <name>Mn(2+)</name>
        <dbReference type="ChEBI" id="CHEBI:29035"/>
        <label>1</label>
    </ligand>
</feature>
<feature type="binding site" evidence="1">
    <location>
        <position position="406"/>
    </location>
    <ligand>
        <name>Mn(2+)</name>
        <dbReference type="ChEBI" id="CHEBI:29035"/>
        <label>1</label>
    </ligand>
</feature>
<feature type="binding site" evidence="1">
    <location>
        <position position="443"/>
    </location>
    <ligand>
        <name>Mn(2+)</name>
        <dbReference type="ChEBI" id="CHEBI:29035"/>
        <label>2</label>
    </ligand>
</feature>
<feature type="binding site" evidence="1">
    <location>
        <position position="444"/>
    </location>
    <ligand>
        <name>Mn(2+)</name>
        <dbReference type="ChEBI" id="CHEBI:29035"/>
        <label>2</label>
    </ligand>
</feature>
<feature type="binding site" evidence="1">
    <location>
        <position position="461"/>
    </location>
    <ligand>
        <name>Mn(2+)</name>
        <dbReference type="ChEBI" id="CHEBI:29035"/>
        <label>1</label>
    </ligand>
</feature>
<reference key="1">
    <citation type="journal article" date="2003" name="DNA Res.">
        <title>Complete genome structure of Gloeobacter violaceus PCC 7421, a cyanobacterium that lacks thylakoids.</title>
        <authorList>
            <person name="Nakamura Y."/>
            <person name="Kaneko T."/>
            <person name="Sato S."/>
            <person name="Mimuro M."/>
            <person name="Miyashita H."/>
            <person name="Tsuchiya T."/>
            <person name="Sasamoto S."/>
            <person name="Watanabe A."/>
            <person name="Kawashima K."/>
            <person name="Kishida Y."/>
            <person name="Kiyokawa C."/>
            <person name="Kohara M."/>
            <person name="Matsumoto M."/>
            <person name="Matsuno A."/>
            <person name="Nakazaki N."/>
            <person name="Shimpo S."/>
            <person name="Takeuchi C."/>
            <person name="Yamada M."/>
            <person name="Tabata S."/>
        </authorList>
    </citation>
    <scope>NUCLEOTIDE SEQUENCE [LARGE SCALE GENOMIC DNA]</scope>
    <source>
        <strain>ATCC 29082 / PCC 7421</strain>
    </source>
</reference>
<evidence type="ECO:0000255" key="1">
    <source>
        <dbReference type="HAMAP-Rule" id="MF_01038"/>
    </source>
</evidence>
<name>GPMI_GLOVI</name>
<accession>Q7NMK9</accession>
<protein>
    <recommendedName>
        <fullName evidence="1">2,3-bisphosphoglycerate-independent phosphoglycerate mutase</fullName>
        <shortName evidence="1">BPG-independent PGAM</shortName>
        <shortName evidence="1">Phosphoglyceromutase</shortName>
        <shortName evidence="1">iPGM</shortName>
        <ecNumber evidence="1">5.4.2.12</ecNumber>
    </recommendedName>
</protein>
<dbReference type="EC" id="5.4.2.12" evidence="1"/>
<dbReference type="EMBL" id="BA000045">
    <property type="protein sequence ID" value="BAC88697.1"/>
    <property type="molecule type" value="Genomic_DNA"/>
</dbReference>
<dbReference type="RefSeq" id="NP_923702.1">
    <property type="nucleotide sequence ID" value="NC_005125.1"/>
</dbReference>
<dbReference type="RefSeq" id="WP_011140758.1">
    <property type="nucleotide sequence ID" value="NC_005125.1"/>
</dbReference>
<dbReference type="SMR" id="Q7NMK9"/>
<dbReference type="STRING" id="251221.gene:10758233"/>
<dbReference type="EnsemblBacteria" id="BAC88697">
    <property type="protein sequence ID" value="BAC88697"/>
    <property type="gene ID" value="BAC88697"/>
</dbReference>
<dbReference type="KEGG" id="gvi:gll0756"/>
<dbReference type="PATRIC" id="fig|251221.4.peg.770"/>
<dbReference type="eggNOG" id="COG0696">
    <property type="taxonomic scope" value="Bacteria"/>
</dbReference>
<dbReference type="HOGENOM" id="CLU_026099_2_0_3"/>
<dbReference type="InParanoid" id="Q7NMK9"/>
<dbReference type="OrthoDB" id="9800863at2"/>
<dbReference type="PhylomeDB" id="Q7NMK9"/>
<dbReference type="UniPathway" id="UPA00109">
    <property type="reaction ID" value="UER00186"/>
</dbReference>
<dbReference type="Proteomes" id="UP000000557">
    <property type="component" value="Chromosome"/>
</dbReference>
<dbReference type="GO" id="GO:0005829">
    <property type="term" value="C:cytosol"/>
    <property type="evidence" value="ECO:0000318"/>
    <property type="project" value="GO_Central"/>
</dbReference>
<dbReference type="GO" id="GO:0030145">
    <property type="term" value="F:manganese ion binding"/>
    <property type="evidence" value="ECO:0000318"/>
    <property type="project" value="GO_Central"/>
</dbReference>
<dbReference type="GO" id="GO:0004619">
    <property type="term" value="F:phosphoglycerate mutase activity"/>
    <property type="evidence" value="ECO:0000318"/>
    <property type="project" value="GO_Central"/>
</dbReference>
<dbReference type="GO" id="GO:0005975">
    <property type="term" value="P:carbohydrate metabolic process"/>
    <property type="evidence" value="ECO:0000318"/>
    <property type="project" value="GO_Central"/>
</dbReference>
<dbReference type="GO" id="GO:0006007">
    <property type="term" value="P:glucose catabolic process"/>
    <property type="evidence" value="ECO:0007669"/>
    <property type="project" value="InterPro"/>
</dbReference>
<dbReference type="GO" id="GO:0006096">
    <property type="term" value="P:glycolytic process"/>
    <property type="evidence" value="ECO:0007669"/>
    <property type="project" value="UniProtKB-UniRule"/>
</dbReference>
<dbReference type="CDD" id="cd16010">
    <property type="entry name" value="iPGM"/>
    <property type="match status" value="1"/>
</dbReference>
<dbReference type="FunFam" id="3.40.1450.10:FF:000002">
    <property type="entry name" value="2,3-bisphosphoglycerate-independent phosphoglycerate mutase"/>
    <property type="match status" value="1"/>
</dbReference>
<dbReference type="Gene3D" id="3.40.720.10">
    <property type="entry name" value="Alkaline Phosphatase, subunit A"/>
    <property type="match status" value="1"/>
</dbReference>
<dbReference type="Gene3D" id="3.40.1450.10">
    <property type="entry name" value="BPG-independent phosphoglycerate mutase, domain B"/>
    <property type="match status" value="1"/>
</dbReference>
<dbReference type="HAMAP" id="MF_01038">
    <property type="entry name" value="GpmI"/>
    <property type="match status" value="1"/>
</dbReference>
<dbReference type="InterPro" id="IPR017850">
    <property type="entry name" value="Alkaline_phosphatase_core_sf"/>
</dbReference>
<dbReference type="InterPro" id="IPR011258">
    <property type="entry name" value="BPG-indep_PGM_N"/>
</dbReference>
<dbReference type="InterPro" id="IPR006124">
    <property type="entry name" value="Metalloenzyme"/>
</dbReference>
<dbReference type="InterPro" id="IPR036646">
    <property type="entry name" value="PGAM_B_sf"/>
</dbReference>
<dbReference type="InterPro" id="IPR005995">
    <property type="entry name" value="Pgm_bpd_ind"/>
</dbReference>
<dbReference type="NCBIfam" id="TIGR01307">
    <property type="entry name" value="pgm_bpd_ind"/>
    <property type="match status" value="1"/>
</dbReference>
<dbReference type="PANTHER" id="PTHR31637">
    <property type="entry name" value="2,3-BISPHOSPHOGLYCERATE-INDEPENDENT PHOSPHOGLYCERATE MUTASE"/>
    <property type="match status" value="1"/>
</dbReference>
<dbReference type="PANTHER" id="PTHR31637:SF0">
    <property type="entry name" value="2,3-BISPHOSPHOGLYCERATE-INDEPENDENT PHOSPHOGLYCERATE MUTASE"/>
    <property type="match status" value="1"/>
</dbReference>
<dbReference type="Pfam" id="PF06415">
    <property type="entry name" value="iPGM_N"/>
    <property type="match status" value="1"/>
</dbReference>
<dbReference type="Pfam" id="PF01676">
    <property type="entry name" value="Metalloenzyme"/>
    <property type="match status" value="1"/>
</dbReference>
<dbReference type="PIRSF" id="PIRSF001492">
    <property type="entry name" value="IPGAM"/>
    <property type="match status" value="1"/>
</dbReference>
<dbReference type="SUPFAM" id="SSF64158">
    <property type="entry name" value="2,3-Bisphosphoglycerate-independent phosphoglycerate mutase, substrate-binding domain"/>
    <property type="match status" value="1"/>
</dbReference>
<dbReference type="SUPFAM" id="SSF53649">
    <property type="entry name" value="Alkaline phosphatase-like"/>
    <property type="match status" value="1"/>
</dbReference>
<organism>
    <name type="scientific">Gloeobacter violaceus (strain ATCC 29082 / PCC 7421)</name>
    <dbReference type="NCBI Taxonomy" id="251221"/>
    <lineage>
        <taxon>Bacteria</taxon>
        <taxon>Bacillati</taxon>
        <taxon>Cyanobacteriota</taxon>
        <taxon>Cyanophyceae</taxon>
        <taxon>Gloeobacterales</taxon>
        <taxon>Gloeobacteraceae</taxon>
        <taxon>Gloeobacter</taxon>
    </lineage>
</organism>
<gene>
    <name evidence="1" type="primary">gpmI</name>
    <name type="ordered locus">gll0756</name>
</gene>
<keyword id="KW-0324">Glycolysis</keyword>
<keyword id="KW-0413">Isomerase</keyword>
<keyword id="KW-0464">Manganese</keyword>
<keyword id="KW-0479">Metal-binding</keyword>
<keyword id="KW-1185">Reference proteome</keyword>
<comment type="function">
    <text evidence="1">Catalyzes the interconversion of 2-phosphoglycerate and 3-phosphoglycerate.</text>
</comment>
<comment type="catalytic activity">
    <reaction evidence="1">
        <text>(2R)-2-phosphoglycerate = (2R)-3-phosphoglycerate</text>
        <dbReference type="Rhea" id="RHEA:15901"/>
        <dbReference type="ChEBI" id="CHEBI:58272"/>
        <dbReference type="ChEBI" id="CHEBI:58289"/>
        <dbReference type="EC" id="5.4.2.12"/>
    </reaction>
</comment>
<comment type="cofactor">
    <cofactor evidence="1">
        <name>Mn(2+)</name>
        <dbReference type="ChEBI" id="CHEBI:29035"/>
    </cofactor>
    <text evidence="1">Binds 2 manganese ions per subunit.</text>
</comment>
<comment type="pathway">
    <text evidence="1">Carbohydrate degradation; glycolysis; pyruvate from D-glyceraldehyde 3-phosphate: step 3/5.</text>
</comment>
<comment type="subunit">
    <text evidence="1">Monomer.</text>
</comment>
<comment type="similarity">
    <text evidence="1">Belongs to the BPG-independent phosphoglycerate mutase family.</text>
</comment>
<proteinExistence type="inferred from homology"/>